<dbReference type="EC" id="2.7.7.3" evidence="1"/>
<dbReference type="EMBL" id="CP000472">
    <property type="protein sequence ID" value="ACJ31610.1"/>
    <property type="molecule type" value="Genomic_DNA"/>
</dbReference>
<dbReference type="RefSeq" id="WP_020914939.1">
    <property type="nucleotide sequence ID" value="NC_011566.1"/>
</dbReference>
<dbReference type="SMR" id="B8CVD4"/>
<dbReference type="STRING" id="225849.swp_4995"/>
<dbReference type="KEGG" id="swp:swp_4995"/>
<dbReference type="eggNOG" id="COG0669">
    <property type="taxonomic scope" value="Bacteria"/>
</dbReference>
<dbReference type="HOGENOM" id="CLU_100149_0_1_6"/>
<dbReference type="OrthoDB" id="9806661at2"/>
<dbReference type="UniPathway" id="UPA00241">
    <property type="reaction ID" value="UER00355"/>
</dbReference>
<dbReference type="Proteomes" id="UP000000753">
    <property type="component" value="Chromosome"/>
</dbReference>
<dbReference type="GO" id="GO:0005737">
    <property type="term" value="C:cytoplasm"/>
    <property type="evidence" value="ECO:0007669"/>
    <property type="project" value="UniProtKB-SubCell"/>
</dbReference>
<dbReference type="GO" id="GO:0005524">
    <property type="term" value="F:ATP binding"/>
    <property type="evidence" value="ECO:0007669"/>
    <property type="project" value="UniProtKB-KW"/>
</dbReference>
<dbReference type="GO" id="GO:0004595">
    <property type="term" value="F:pantetheine-phosphate adenylyltransferase activity"/>
    <property type="evidence" value="ECO:0007669"/>
    <property type="project" value="UniProtKB-UniRule"/>
</dbReference>
<dbReference type="GO" id="GO:0015937">
    <property type="term" value="P:coenzyme A biosynthetic process"/>
    <property type="evidence" value="ECO:0007669"/>
    <property type="project" value="UniProtKB-UniRule"/>
</dbReference>
<dbReference type="CDD" id="cd02163">
    <property type="entry name" value="PPAT"/>
    <property type="match status" value="1"/>
</dbReference>
<dbReference type="FunFam" id="3.40.50.620:FF:000012">
    <property type="entry name" value="Phosphopantetheine adenylyltransferase"/>
    <property type="match status" value="1"/>
</dbReference>
<dbReference type="Gene3D" id="3.40.50.620">
    <property type="entry name" value="HUPs"/>
    <property type="match status" value="1"/>
</dbReference>
<dbReference type="HAMAP" id="MF_00151">
    <property type="entry name" value="PPAT_bact"/>
    <property type="match status" value="1"/>
</dbReference>
<dbReference type="InterPro" id="IPR004821">
    <property type="entry name" value="Cyt_trans-like"/>
</dbReference>
<dbReference type="InterPro" id="IPR001980">
    <property type="entry name" value="PPAT"/>
</dbReference>
<dbReference type="InterPro" id="IPR014729">
    <property type="entry name" value="Rossmann-like_a/b/a_fold"/>
</dbReference>
<dbReference type="NCBIfam" id="TIGR01510">
    <property type="entry name" value="coaD_prev_kdtB"/>
    <property type="match status" value="1"/>
</dbReference>
<dbReference type="NCBIfam" id="TIGR00125">
    <property type="entry name" value="cyt_tran_rel"/>
    <property type="match status" value="1"/>
</dbReference>
<dbReference type="PANTHER" id="PTHR21342">
    <property type="entry name" value="PHOSPHOPANTETHEINE ADENYLYLTRANSFERASE"/>
    <property type="match status" value="1"/>
</dbReference>
<dbReference type="PANTHER" id="PTHR21342:SF1">
    <property type="entry name" value="PHOSPHOPANTETHEINE ADENYLYLTRANSFERASE"/>
    <property type="match status" value="1"/>
</dbReference>
<dbReference type="Pfam" id="PF01467">
    <property type="entry name" value="CTP_transf_like"/>
    <property type="match status" value="1"/>
</dbReference>
<dbReference type="PRINTS" id="PR01020">
    <property type="entry name" value="LPSBIOSNTHSS"/>
</dbReference>
<dbReference type="SUPFAM" id="SSF52374">
    <property type="entry name" value="Nucleotidylyl transferase"/>
    <property type="match status" value="1"/>
</dbReference>
<feature type="chain" id="PRO_1000118085" description="Phosphopantetheine adenylyltransferase">
    <location>
        <begin position="1"/>
        <end position="160"/>
    </location>
</feature>
<feature type="binding site" evidence="1">
    <location>
        <begin position="10"/>
        <end position="11"/>
    </location>
    <ligand>
        <name>ATP</name>
        <dbReference type="ChEBI" id="CHEBI:30616"/>
    </ligand>
</feature>
<feature type="binding site" evidence="1">
    <location>
        <position position="10"/>
    </location>
    <ligand>
        <name>substrate</name>
    </ligand>
</feature>
<feature type="binding site" evidence="1">
    <location>
        <position position="18"/>
    </location>
    <ligand>
        <name>ATP</name>
        <dbReference type="ChEBI" id="CHEBI:30616"/>
    </ligand>
</feature>
<feature type="binding site" evidence="1">
    <location>
        <position position="42"/>
    </location>
    <ligand>
        <name>substrate</name>
    </ligand>
</feature>
<feature type="binding site" evidence="1">
    <location>
        <position position="74"/>
    </location>
    <ligand>
        <name>substrate</name>
    </ligand>
</feature>
<feature type="binding site" evidence="1">
    <location>
        <position position="88"/>
    </location>
    <ligand>
        <name>substrate</name>
    </ligand>
</feature>
<feature type="binding site" evidence="1">
    <location>
        <begin position="89"/>
        <end position="91"/>
    </location>
    <ligand>
        <name>ATP</name>
        <dbReference type="ChEBI" id="CHEBI:30616"/>
    </ligand>
</feature>
<feature type="binding site" evidence="1">
    <location>
        <position position="99"/>
    </location>
    <ligand>
        <name>ATP</name>
        <dbReference type="ChEBI" id="CHEBI:30616"/>
    </ligand>
</feature>
<feature type="binding site" evidence="1">
    <location>
        <begin position="124"/>
        <end position="130"/>
    </location>
    <ligand>
        <name>ATP</name>
        <dbReference type="ChEBI" id="CHEBI:30616"/>
    </ligand>
</feature>
<feature type="site" description="Transition state stabilizer" evidence="1">
    <location>
        <position position="18"/>
    </location>
</feature>
<sequence>MHTRAIYPGTFDPVTNGHADLIERAAKLFKHVVIGIALNPSKKPRFTLDERIELLKTVTAHLDNVEVVGFSGLLVDFAKEQQASVLVRGLRAVSDFEYEFQLANMNRRLSPDLESVFLTPAEENSFISSTLVKEVAHHGGDVSQFVHIKVANALMKKEQG</sequence>
<accession>B8CVD4</accession>
<gene>
    <name evidence="1" type="primary">coaD</name>
    <name type="ordered locus">swp_4995</name>
</gene>
<reference key="1">
    <citation type="journal article" date="2008" name="PLoS ONE">
        <title>Environmental adaptation: genomic analysis of the piezotolerant and psychrotolerant deep-sea iron reducing bacterium Shewanella piezotolerans WP3.</title>
        <authorList>
            <person name="Wang F."/>
            <person name="Wang J."/>
            <person name="Jian H."/>
            <person name="Zhang B."/>
            <person name="Li S."/>
            <person name="Wang F."/>
            <person name="Zeng X."/>
            <person name="Gao L."/>
            <person name="Bartlett D.H."/>
            <person name="Yu J."/>
            <person name="Hu S."/>
            <person name="Xiao X."/>
        </authorList>
    </citation>
    <scope>NUCLEOTIDE SEQUENCE [LARGE SCALE GENOMIC DNA]</scope>
    <source>
        <strain>WP3 / JCM 13877</strain>
    </source>
</reference>
<protein>
    <recommendedName>
        <fullName evidence="1">Phosphopantetheine adenylyltransferase</fullName>
        <ecNumber evidence="1">2.7.7.3</ecNumber>
    </recommendedName>
    <alternativeName>
        <fullName evidence="1">Dephospho-CoA pyrophosphorylase</fullName>
    </alternativeName>
    <alternativeName>
        <fullName evidence="1">Pantetheine-phosphate adenylyltransferase</fullName>
        <shortName evidence="1">PPAT</shortName>
    </alternativeName>
</protein>
<keyword id="KW-0067">ATP-binding</keyword>
<keyword id="KW-0173">Coenzyme A biosynthesis</keyword>
<keyword id="KW-0963">Cytoplasm</keyword>
<keyword id="KW-0460">Magnesium</keyword>
<keyword id="KW-0547">Nucleotide-binding</keyword>
<keyword id="KW-0548">Nucleotidyltransferase</keyword>
<keyword id="KW-0808">Transferase</keyword>
<organism>
    <name type="scientific">Shewanella piezotolerans (strain WP3 / JCM 13877)</name>
    <dbReference type="NCBI Taxonomy" id="225849"/>
    <lineage>
        <taxon>Bacteria</taxon>
        <taxon>Pseudomonadati</taxon>
        <taxon>Pseudomonadota</taxon>
        <taxon>Gammaproteobacteria</taxon>
        <taxon>Alteromonadales</taxon>
        <taxon>Shewanellaceae</taxon>
        <taxon>Shewanella</taxon>
    </lineage>
</organism>
<comment type="function">
    <text evidence="1">Reversibly transfers an adenylyl group from ATP to 4'-phosphopantetheine, yielding dephospho-CoA (dPCoA) and pyrophosphate.</text>
</comment>
<comment type="catalytic activity">
    <reaction evidence="1">
        <text>(R)-4'-phosphopantetheine + ATP + H(+) = 3'-dephospho-CoA + diphosphate</text>
        <dbReference type="Rhea" id="RHEA:19801"/>
        <dbReference type="ChEBI" id="CHEBI:15378"/>
        <dbReference type="ChEBI" id="CHEBI:30616"/>
        <dbReference type="ChEBI" id="CHEBI:33019"/>
        <dbReference type="ChEBI" id="CHEBI:57328"/>
        <dbReference type="ChEBI" id="CHEBI:61723"/>
        <dbReference type="EC" id="2.7.7.3"/>
    </reaction>
</comment>
<comment type="cofactor">
    <cofactor evidence="1">
        <name>Mg(2+)</name>
        <dbReference type="ChEBI" id="CHEBI:18420"/>
    </cofactor>
</comment>
<comment type="pathway">
    <text evidence="1">Cofactor biosynthesis; coenzyme A biosynthesis; CoA from (R)-pantothenate: step 4/5.</text>
</comment>
<comment type="subunit">
    <text evidence="1">Homohexamer.</text>
</comment>
<comment type="subcellular location">
    <subcellularLocation>
        <location evidence="1">Cytoplasm</location>
    </subcellularLocation>
</comment>
<comment type="similarity">
    <text evidence="1">Belongs to the bacterial CoaD family.</text>
</comment>
<proteinExistence type="inferred from homology"/>
<name>COAD_SHEPW</name>
<evidence type="ECO:0000255" key="1">
    <source>
        <dbReference type="HAMAP-Rule" id="MF_00151"/>
    </source>
</evidence>